<organism>
    <name type="scientific">Buchnera aphidicola subsp. Acyrthosiphon pisum (strain Tuc7)</name>
    <dbReference type="NCBI Taxonomy" id="561501"/>
    <lineage>
        <taxon>Bacteria</taxon>
        <taxon>Pseudomonadati</taxon>
        <taxon>Pseudomonadota</taxon>
        <taxon>Gammaproteobacteria</taxon>
        <taxon>Enterobacterales</taxon>
        <taxon>Erwiniaceae</taxon>
        <taxon>Buchnera</taxon>
    </lineage>
</organism>
<accession>B8D7K1</accession>
<comment type="function">
    <text evidence="1">This protein is one of the two subunits of integration host factor, a specific DNA-binding protein that functions in genetic recombination as well as in transcriptional and translational control.</text>
</comment>
<comment type="subunit">
    <text evidence="1">Heterodimer of an alpha and a beta chain.</text>
</comment>
<comment type="similarity">
    <text evidence="1">Belongs to the bacterial histone-like protein family.</text>
</comment>
<protein>
    <recommendedName>
        <fullName evidence="1">Integration host factor subunit beta</fullName>
        <shortName evidence="1">IHF-beta</shortName>
    </recommendedName>
</protein>
<feature type="chain" id="PRO_1000190438" description="Integration host factor subunit beta">
    <location>
        <begin position="1"/>
        <end position="94"/>
    </location>
</feature>
<dbReference type="EMBL" id="CP001158">
    <property type="protein sequence ID" value="ACL30116.1"/>
    <property type="molecule type" value="Genomic_DNA"/>
</dbReference>
<dbReference type="RefSeq" id="WP_009874261.1">
    <property type="nucleotide sequence ID" value="NC_011834.1"/>
</dbReference>
<dbReference type="SMR" id="B8D7K1"/>
<dbReference type="KEGG" id="bau:BUAPTUC7_303"/>
<dbReference type="HOGENOM" id="CLU_105066_2_0_6"/>
<dbReference type="GO" id="GO:0005694">
    <property type="term" value="C:chromosome"/>
    <property type="evidence" value="ECO:0007669"/>
    <property type="project" value="InterPro"/>
</dbReference>
<dbReference type="GO" id="GO:0005829">
    <property type="term" value="C:cytosol"/>
    <property type="evidence" value="ECO:0007669"/>
    <property type="project" value="TreeGrafter"/>
</dbReference>
<dbReference type="GO" id="GO:0003677">
    <property type="term" value="F:DNA binding"/>
    <property type="evidence" value="ECO:0007669"/>
    <property type="project" value="UniProtKB-UniRule"/>
</dbReference>
<dbReference type="GO" id="GO:0030527">
    <property type="term" value="F:structural constituent of chromatin"/>
    <property type="evidence" value="ECO:0007669"/>
    <property type="project" value="InterPro"/>
</dbReference>
<dbReference type="GO" id="GO:0006310">
    <property type="term" value="P:DNA recombination"/>
    <property type="evidence" value="ECO:0007669"/>
    <property type="project" value="UniProtKB-UniRule"/>
</dbReference>
<dbReference type="GO" id="GO:0006355">
    <property type="term" value="P:regulation of DNA-templated transcription"/>
    <property type="evidence" value="ECO:0007669"/>
    <property type="project" value="UniProtKB-UniRule"/>
</dbReference>
<dbReference type="GO" id="GO:0006417">
    <property type="term" value="P:regulation of translation"/>
    <property type="evidence" value="ECO:0007669"/>
    <property type="project" value="UniProtKB-UniRule"/>
</dbReference>
<dbReference type="CDD" id="cd13836">
    <property type="entry name" value="IHF_B"/>
    <property type="match status" value="1"/>
</dbReference>
<dbReference type="FunFam" id="4.10.520.10:FF:000003">
    <property type="entry name" value="Integration host factor subunit beta"/>
    <property type="match status" value="1"/>
</dbReference>
<dbReference type="Gene3D" id="4.10.520.10">
    <property type="entry name" value="IHF-like DNA-binding proteins"/>
    <property type="match status" value="1"/>
</dbReference>
<dbReference type="HAMAP" id="MF_00381">
    <property type="entry name" value="IHF_beta"/>
    <property type="match status" value="1"/>
</dbReference>
<dbReference type="InterPro" id="IPR000119">
    <property type="entry name" value="Hist_DNA-bd"/>
</dbReference>
<dbReference type="InterPro" id="IPR020816">
    <property type="entry name" value="Histone-like_DNA-bd_CS"/>
</dbReference>
<dbReference type="InterPro" id="IPR010992">
    <property type="entry name" value="IHF-like_DNA-bd_dom_sf"/>
</dbReference>
<dbReference type="InterPro" id="IPR005685">
    <property type="entry name" value="IHF_beta"/>
</dbReference>
<dbReference type="NCBIfam" id="TIGR00988">
    <property type="entry name" value="hip"/>
    <property type="match status" value="1"/>
</dbReference>
<dbReference type="NCBIfam" id="NF001222">
    <property type="entry name" value="PRK00199.1"/>
    <property type="match status" value="1"/>
</dbReference>
<dbReference type="PANTHER" id="PTHR33175">
    <property type="entry name" value="DNA-BINDING PROTEIN HU"/>
    <property type="match status" value="1"/>
</dbReference>
<dbReference type="PANTHER" id="PTHR33175:SF5">
    <property type="entry name" value="INTEGRATION HOST FACTOR SUBUNIT BETA"/>
    <property type="match status" value="1"/>
</dbReference>
<dbReference type="Pfam" id="PF00216">
    <property type="entry name" value="Bac_DNA_binding"/>
    <property type="match status" value="1"/>
</dbReference>
<dbReference type="PRINTS" id="PR01727">
    <property type="entry name" value="DNABINDINGHU"/>
</dbReference>
<dbReference type="SMART" id="SM00411">
    <property type="entry name" value="BHL"/>
    <property type="match status" value="1"/>
</dbReference>
<dbReference type="SUPFAM" id="SSF47729">
    <property type="entry name" value="IHF-like DNA-binding proteins"/>
    <property type="match status" value="1"/>
</dbReference>
<dbReference type="PROSITE" id="PS00045">
    <property type="entry name" value="HISTONE_LIKE"/>
    <property type="match status" value="1"/>
</dbReference>
<keyword id="KW-0233">DNA recombination</keyword>
<keyword id="KW-0238">DNA-binding</keyword>
<keyword id="KW-0804">Transcription</keyword>
<keyword id="KW-0805">Transcription regulation</keyword>
<keyword id="KW-0810">Translation regulation</keyword>
<proteinExistence type="inferred from homology"/>
<gene>
    <name evidence="1" type="primary">ihfB</name>
    <name evidence="1" type="synonym">himD</name>
    <name type="ordered locus">BUAPTUC7_303</name>
</gene>
<evidence type="ECO:0000255" key="1">
    <source>
        <dbReference type="HAMAP-Rule" id="MF_00381"/>
    </source>
</evidence>
<name>IHFB_BUCAT</name>
<sequence>MIKSELFERIAEQKINISNKMIERAAKEMLEHMIISLANGKRIEIRGFGSFSLHYRSSRIGRNPKTGKSVKLNEKYVPYFKPGKKLRDRANIHK</sequence>
<reference key="1">
    <citation type="journal article" date="2009" name="Science">
        <title>The dynamics and time scale of ongoing genomic erosion in symbiotic bacteria.</title>
        <authorList>
            <person name="Moran N.A."/>
            <person name="McLaughlin H.J."/>
            <person name="Sorek R."/>
        </authorList>
    </citation>
    <scope>NUCLEOTIDE SEQUENCE [LARGE SCALE GENOMIC DNA]</scope>
    <source>
        <strain>Tuc7</strain>
    </source>
</reference>